<accession>P01694</accession>
<comment type="miscellaneous">
    <text>This chain was obtained from an immunoglobulin that had no detectable antigen-binding activity and that was produced by immunization of a single rabbit with group a streptococcal vaccine.</text>
</comment>
<sequence>AYDMTQTPSSVSAAVGGTVTINCQASEDISANLAWYQQKPGQPPKLLIYAASDLASGVPSRFKGSGSGTEYTLTISGVQCADAATYYCQSADYSGSAVTFGGGTEVVVKG</sequence>
<protein>
    <recommendedName>
        <fullName>Ig kappa chain V region 3547</fullName>
    </recommendedName>
</protein>
<dbReference type="PIR" id="A01957">
    <property type="entry name" value="KVRB54"/>
</dbReference>
<dbReference type="SMR" id="P01694"/>
<dbReference type="FunCoup" id="P01694">
    <property type="interactions" value="212"/>
</dbReference>
<dbReference type="PaxDb" id="9986-ENSOCUP00000015237"/>
<dbReference type="eggNOG" id="ENOG502S3KF">
    <property type="taxonomic scope" value="Eukaryota"/>
</dbReference>
<dbReference type="InParanoid" id="P01694"/>
<dbReference type="Proteomes" id="UP000001811">
    <property type="component" value="Unplaced"/>
</dbReference>
<dbReference type="GO" id="GO:0019814">
    <property type="term" value="C:immunoglobulin complex"/>
    <property type="evidence" value="ECO:0007669"/>
    <property type="project" value="UniProtKB-KW"/>
</dbReference>
<dbReference type="GO" id="GO:0002250">
    <property type="term" value="P:adaptive immune response"/>
    <property type="evidence" value="ECO:0007669"/>
    <property type="project" value="UniProtKB-KW"/>
</dbReference>
<dbReference type="FunFam" id="2.60.40.10:FF:000212">
    <property type="entry name" value="Immunoglobulin kappa chain variable 12-38"/>
    <property type="match status" value="1"/>
</dbReference>
<dbReference type="Gene3D" id="2.60.40.10">
    <property type="entry name" value="Immunoglobulins"/>
    <property type="match status" value="1"/>
</dbReference>
<dbReference type="InterPro" id="IPR007110">
    <property type="entry name" value="Ig-like_dom"/>
</dbReference>
<dbReference type="InterPro" id="IPR036179">
    <property type="entry name" value="Ig-like_dom_sf"/>
</dbReference>
<dbReference type="InterPro" id="IPR013783">
    <property type="entry name" value="Ig-like_fold"/>
</dbReference>
<dbReference type="InterPro" id="IPR003599">
    <property type="entry name" value="Ig_sub"/>
</dbReference>
<dbReference type="InterPro" id="IPR003598">
    <property type="entry name" value="Ig_sub2"/>
</dbReference>
<dbReference type="InterPro" id="IPR013106">
    <property type="entry name" value="Ig_V-set"/>
</dbReference>
<dbReference type="InterPro" id="IPR050150">
    <property type="entry name" value="IgV_Light_Chain"/>
</dbReference>
<dbReference type="PANTHER" id="PTHR23267">
    <property type="entry name" value="IMMUNOGLOBULIN LIGHT CHAIN"/>
    <property type="match status" value="1"/>
</dbReference>
<dbReference type="Pfam" id="PF07686">
    <property type="entry name" value="V-set"/>
    <property type="match status" value="1"/>
</dbReference>
<dbReference type="SMART" id="SM00409">
    <property type="entry name" value="IG"/>
    <property type="match status" value="1"/>
</dbReference>
<dbReference type="SMART" id="SM00408">
    <property type="entry name" value="IGc2"/>
    <property type="match status" value="1"/>
</dbReference>
<dbReference type="SMART" id="SM00406">
    <property type="entry name" value="IGv"/>
    <property type="match status" value="1"/>
</dbReference>
<dbReference type="SUPFAM" id="SSF48726">
    <property type="entry name" value="Immunoglobulin"/>
    <property type="match status" value="1"/>
</dbReference>
<dbReference type="PROSITE" id="PS50835">
    <property type="entry name" value="IG_LIKE"/>
    <property type="match status" value="1"/>
</dbReference>
<feature type="chain" id="PRO_0000059731" description="Ig kappa chain V region 3547">
    <location>
        <begin position="1"/>
        <end position="110" status="greater than"/>
    </location>
</feature>
<feature type="region of interest" description="Framework-1">
    <location>
        <begin position="1"/>
        <end position="23"/>
    </location>
</feature>
<feature type="region of interest" description="Complementarity-determining-1">
    <location>
        <begin position="24"/>
        <end position="34"/>
    </location>
</feature>
<feature type="region of interest" description="Framework-2">
    <location>
        <begin position="35"/>
        <end position="49"/>
    </location>
</feature>
<feature type="region of interest" description="Complementarity-determining-2">
    <location>
        <begin position="50"/>
        <end position="56"/>
    </location>
</feature>
<feature type="region of interest" description="Framework-3">
    <location>
        <begin position="57"/>
        <end position="88"/>
    </location>
</feature>
<feature type="region of interest" description="Complementarity-determining-3">
    <location>
        <begin position="89"/>
        <end position="99"/>
    </location>
</feature>
<feature type="region of interest" description="Framework-4">
    <location>
        <begin position="100"/>
        <end position="109"/>
    </location>
</feature>
<feature type="non-terminal residue">
    <location>
        <position position="110"/>
    </location>
</feature>
<name>KV13_RABIT</name>
<reference key="1">
    <citation type="journal article" date="1976" name="Biochemistry">
        <title>Amino acid sequence of rabbit light chains: variable region of a light chain from a homogeneous immunoglobulin raised by streptococcal immunization.</title>
        <authorList>
            <person name="Thunberg A.L."/>
            <person name="Kindt T.J."/>
        </authorList>
    </citation>
    <scope>PROTEIN SEQUENCE</scope>
</reference>
<keyword id="KW-1064">Adaptive immunity</keyword>
<keyword id="KW-0903">Direct protein sequencing</keyword>
<keyword id="KW-0391">Immunity</keyword>
<keyword id="KW-1280">Immunoglobulin</keyword>
<keyword id="KW-1185">Reference proteome</keyword>
<organism>
    <name type="scientific">Oryctolagus cuniculus</name>
    <name type="common">Rabbit</name>
    <dbReference type="NCBI Taxonomy" id="9986"/>
    <lineage>
        <taxon>Eukaryota</taxon>
        <taxon>Metazoa</taxon>
        <taxon>Chordata</taxon>
        <taxon>Craniata</taxon>
        <taxon>Vertebrata</taxon>
        <taxon>Euteleostomi</taxon>
        <taxon>Mammalia</taxon>
        <taxon>Eutheria</taxon>
        <taxon>Euarchontoglires</taxon>
        <taxon>Glires</taxon>
        <taxon>Lagomorpha</taxon>
        <taxon>Leporidae</taxon>
        <taxon>Oryctolagus</taxon>
    </lineage>
</organism>
<proteinExistence type="evidence at protein level"/>